<comment type="function">
    <text evidence="1">Transfers the gamma-phosphate of ATP to the 4'-position of a tetraacyldisaccharide 1-phosphate intermediate (termed DS-1-P) to form tetraacyldisaccharide 1,4'-bis-phosphate (lipid IVA).</text>
</comment>
<comment type="catalytic activity">
    <reaction evidence="1">
        <text>a lipid A disaccharide + ATP = a lipid IVA + ADP + H(+)</text>
        <dbReference type="Rhea" id="RHEA:67840"/>
        <dbReference type="ChEBI" id="CHEBI:15378"/>
        <dbReference type="ChEBI" id="CHEBI:30616"/>
        <dbReference type="ChEBI" id="CHEBI:176343"/>
        <dbReference type="ChEBI" id="CHEBI:176425"/>
        <dbReference type="ChEBI" id="CHEBI:456216"/>
        <dbReference type="EC" id="2.7.1.130"/>
    </reaction>
</comment>
<comment type="pathway">
    <text evidence="1">Glycolipid biosynthesis; lipid IV(A) biosynthesis; lipid IV(A) from (3R)-3-hydroxytetradecanoyl-[acyl-carrier-protein] and UDP-N-acetyl-alpha-D-glucosamine: step 6/6.</text>
</comment>
<comment type="similarity">
    <text evidence="1">Belongs to the LpxK family.</text>
</comment>
<reference key="1">
    <citation type="submission" date="2006-11" db="EMBL/GenBank/DDBJ databases">
        <title>Identification and characterization of a new conjugation/ type IVA secretion system (trb/tra) of L. pneumophila Corby localized on a mobile genomic island.</title>
        <authorList>
            <person name="Gloeckner G."/>
            <person name="Albert-Weissenberger C."/>
            <person name="Weinmann E."/>
            <person name="Jacobi S."/>
            <person name="Schunder E."/>
            <person name="Steinert M."/>
            <person name="Buchrieser C."/>
            <person name="Hacker J."/>
            <person name="Heuner K."/>
        </authorList>
    </citation>
    <scope>NUCLEOTIDE SEQUENCE [LARGE SCALE GENOMIC DNA]</scope>
    <source>
        <strain>Corby</strain>
    </source>
</reference>
<keyword id="KW-0067">ATP-binding</keyword>
<keyword id="KW-0418">Kinase</keyword>
<keyword id="KW-0441">Lipid A biosynthesis</keyword>
<keyword id="KW-0444">Lipid biosynthesis</keyword>
<keyword id="KW-0443">Lipid metabolism</keyword>
<keyword id="KW-0547">Nucleotide-binding</keyword>
<keyword id="KW-0808">Transferase</keyword>
<accession>A5ICX5</accession>
<protein>
    <recommendedName>
        <fullName evidence="1">Tetraacyldisaccharide 4'-kinase</fullName>
        <ecNumber evidence="1">2.7.1.130</ecNumber>
    </recommendedName>
    <alternativeName>
        <fullName evidence="1">Lipid A 4'-kinase</fullName>
    </alternativeName>
</protein>
<proteinExistence type="inferred from homology"/>
<evidence type="ECO:0000255" key="1">
    <source>
        <dbReference type="HAMAP-Rule" id="MF_00409"/>
    </source>
</evidence>
<sequence length="323" mass="37023">MSFFVNRIWYGNHFLQWILVPFSWLYRIVIRTRRWYLQRFCQQLYPIPIIVVGNVTVGGVGKTPLVIEIAKKIQQKGLKVGIVSRGYKAAIKHFPYEVKLNDSAELVGDEPLMMARKINCPVVIAPKRNEAVRYLLDKHSVEIIISDDGLQHYKMGRSIEIVVIDGMRKLGNGFCLPAGPLREPDSRLKQVDFVIVNQGAAEGTYSMELIPKNIVRLSTQEEVSNDLFTSEVAAVAGIGNPQRFYSTLSQLGIKFNPYSYPDHHQFKPHDLNDIDLPVIMTEKDAVKCYSFSSDKLYYLPVEAKLNDSFWEAFWSHQQLQGYY</sequence>
<name>LPXK_LEGPC</name>
<dbReference type="EC" id="2.7.1.130" evidence="1"/>
<dbReference type="EMBL" id="CP000675">
    <property type="protein sequence ID" value="ABQ55225.1"/>
    <property type="molecule type" value="Genomic_DNA"/>
</dbReference>
<dbReference type="RefSeq" id="WP_010947544.1">
    <property type="nucleotide sequence ID" value="NZ_JAPMSS010000005.1"/>
</dbReference>
<dbReference type="SMR" id="A5ICX5"/>
<dbReference type="GeneID" id="57035810"/>
<dbReference type="KEGG" id="lpc:LPC_1262"/>
<dbReference type="HOGENOM" id="CLU_038816_2_0_6"/>
<dbReference type="UniPathway" id="UPA00359">
    <property type="reaction ID" value="UER00482"/>
</dbReference>
<dbReference type="GO" id="GO:0005886">
    <property type="term" value="C:plasma membrane"/>
    <property type="evidence" value="ECO:0007669"/>
    <property type="project" value="TreeGrafter"/>
</dbReference>
<dbReference type="GO" id="GO:0005524">
    <property type="term" value="F:ATP binding"/>
    <property type="evidence" value="ECO:0007669"/>
    <property type="project" value="UniProtKB-UniRule"/>
</dbReference>
<dbReference type="GO" id="GO:0009029">
    <property type="term" value="F:tetraacyldisaccharide 4'-kinase activity"/>
    <property type="evidence" value="ECO:0007669"/>
    <property type="project" value="UniProtKB-UniRule"/>
</dbReference>
<dbReference type="GO" id="GO:0009245">
    <property type="term" value="P:lipid A biosynthetic process"/>
    <property type="evidence" value="ECO:0007669"/>
    <property type="project" value="UniProtKB-UniRule"/>
</dbReference>
<dbReference type="GO" id="GO:0009244">
    <property type="term" value="P:lipopolysaccharide core region biosynthetic process"/>
    <property type="evidence" value="ECO:0007669"/>
    <property type="project" value="TreeGrafter"/>
</dbReference>
<dbReference type="HAMAP" id="MF_00409">
    <property type="entry name" value="LpxK"/>
    <property type="match status" value="1"/>
</dbReference>
<dbReference type="InterPro" id="IPR003758">
    <property type="entry name" value="LpxK"/>
</dbReference>
<dbReference type="InterPro" id="IPR027417">
    <property type="entry name" value="P-loop_NTPase"/>
</dbReference>
<dbReference type="NCBIfam" id="TIGR00682">
    <property type="entry name" value="lpxK"/>
    <property type="match status" value="1"/>
</dbReference>
<dbReference type="PANTHER" id="PTHR42724">
    <property type="entry name" value="TETRAACYLDISACCHARIDE 4'-KINASE"/>
    <property type="match status" value="1"/>
</dbReference>
<dbReference type="PANTHER" id="PTHR42724:SF1">
    <property type="entry name" value="TETRAACYLDISACCHARIDE 4'-KINASE, MITOCHONDRIAL-RELATED"/>
    <property type="match status" value="1"/>
</dbReference>
<dbReference type="Pfam" id="PF02606">
    <property type="entry name" value="LpxK"/>
    <property type="match status" value="1"/>
</dbReference>
<dbReference type="SUPFAM" id="SSF52540">
    <property type="entry name" value="P-loop containing nucleoside triphosphate hydrolases"/>
    <property type="match status" value="1"/>
</dbReference>
<organism>
    <name type="scientific">Legionella pneumophila (strain Corby)</name>
    <dbReference type="NCBI Taxonomy" id="400673"/>
    <lineage>
        <taxon>Bacteria</taxon>
        <taxon>Pseudomonadati</taxon>
        <taxon>Pseudomonadota</taxon>
        <taxon>Gammaproteobacteria</taxon>
        <taxon>Legionellales</taxon>
        <taxon>Legionellaceae</taxon>
        <taxon>Legionella</taxon>
    </lineage>
</organism>
<gene>
    <name evidence="1" type="primary">lpxK</name>
    <name type="ordered locus">LPC_1262</name>
</gene>
<feature type="chain" id="PRO_1000049900" description="Tetraacyldisaccharide 4'-kinase">
    <location>
        <begin position="1"/>
        <end position="323"/>
    </location>
</feature>
<feature type="binding site" evidence="1">
    <location>
        <begin position="56"/>
        <end position="63"/>
    </location>
    <ligand>
        <name>ATP</name>
        <dbReference type="ChEBI" id="CHEBI:30616"/>
    </ligand>
</feature>